<feature type="chain" id="PRO_0000108856" description="Phospho-N-acetylmuramoyl-pentapeptide-transferase">
    <location>
        <begin position="1"/>
        <end position="359"/>
    </location>
</feature>
<feature type="transmembrane region" description="Helical" evidence="1">
    <location>
        <begin position="3"/>
        <end position="23"/>
    </location>
</feature>
<feature type="transmembrane region" description="Helical" evidence="1">
    <location>
        <begin position="55"/>
        <end position="75"/>
    </location>
</feature>
<feature type="transmembrane region" description="Helical" evidence="1">
    <location>
        <begin position="80"/>
        <end position="100"/>
    </location>
</feature>
<feature type="transmembrane region" description="Helical" evidence="1">
    <location>
        <begin position="117"/>
        <end position="137"/>
    </location>
</feature>
<feature type="transmembrane region" description="Helical" evidence="1">
    <location>
        <begin position="156"/>
        <end position="176"/>
    </location>
</feature>
<feature type="transmembrane region" description="Helical" evidence="1">
    <location>
        <begin position="187"/>
        <end position="207"/>
    </location>
</feature>
<feature type="transmembrane region" description="Helical" evidence="1">
    <location>
        <begin position="231"/>
        <end position="251"/>
    </location>
</feature>
<feature type="transmembrane region" description="Helical" evidence="1">
    <location>
        <begin position="255"/>
        <end position="275"/>
    </location>
</feature>
<feature type="transmembrane region" description="Helical" evidence="1">
    <location>
        <begin position="280"/>
        <end position="300"/>
    </location>
</feature>
<feature type="transmembrane region" description="Helical" evidence="1">
    <location>
        <begin position="334"/>
        <end position="354"/>
    </location>
</feature>
<gene>
    <name evidence="1" type="primary">mraY</name>
    <name type="synonym">murX</name>
    <name type="ordered locus">Rv2156c</name>
    <name type="ORF">MTCY270.12</name>
</gene>
<organism>
    <name type="scientific">Mycobacterium tuberculosis (strain ATCC 25618 / H37Rv)</name>
    <dbReference type="NCBI Taxonomy" id="83332"/>
    <lineage>
        <taxon>Bacteria</taxon>
        <taxon>Bacillati</taxon>
        <taxon>Actinomycetota</taxon>
        <taxon>Actinomycetes</taxon>
        <taxon>Mycobacteriales</taxon>
        <taxon>Mycobacteriaceae</taxon>
        <taxon>Mycobacterium</taxon>
        <taxon>Mycobacterium tuberculosis complex</taxon>
    </lineage>
</organism>
<proteinExistence type="evidence at protein level"/>
<accession>P9WMW7</accession>
<accession>L0TBH3</accession>
<accession>O06221</accession>
<accession>P64259</accession>
<comment type="function">
    <text evidence="1">Catalyzes the initial step of the lipid cycle reactions in the biosynthesis of the cell wall peptidoglycan: transfers peptidoglycan precursor phospho-MurNAc-pentapeptide from UDP-MurNAc-pentapeptide onto the lipid carrier undecaprenyl phosphate, yielding undecaprenyl-pyrophosphoryl-MurNAc-pentapeptide, known as lipid I.</text>
</comment>
<comment type="catalytic activity">
    <reaction evidence="1">
        <text>UDP-N-acetyl-alpha-D-muramoyl-L-alanyl-gamma-D-glutamyl-meso-2,6-diaminopimeloyl-D-alanyl-D-alanine + di-trans,octa-cis-undecaprenyl phosphate = di-trans,octa-cis-undecaprenyl diphospho-N-acetyl-alpha-D-muramoyl-L-alanyl-D-glutamyl-meso-2,6-diaminopimeloyl-D-alanyl-D-alanine + UMP</text>
        <dbReference type="Rhea" id="RHEA:28386"/>
        <dbReference type="ChEBI" id="CHEBI:57865"/>
        <dbReference type="ChEBI" id="CHEBI:60392"/>
        <dbReference type="ChEBI" id="CHEBI:61386"/>
        <dbReference type="ChEBI" id="CHEBI:61387"/>
        <dbReference type="EC" id="2.7.8.13"/>
    </reaction>
</comment>
<comment type="cofactor">
    <cofactor evidence="1">
        <name>Mg(2+)</name>
        <dbReference type="ChEBI" id="CHEBI:18420"/>
    </cofactor>
</comment>
<comment type="pathway">
    <text evidence="1">Cell wall biogenesis; peptidoglycan biosynthesis.</text>
</comment>
<comment type="subcellular location">
    <subcellularLocation>
        <location evidence="1">Cell membrane</location>
        <topology evidence="1">Multi-pass membrane protein</topology>
    </subcellularLocation>
</comment>
<comment type="miscellaneous">
    <text>Was identified as a high-confidence drug target.</text>
</comment>
<comment type="similarity">
    <text evidence="1">Belongs to the glycosyltransferase 4 family. MraY subfamily.</text>
</comment>
<keyword id="KW-0131">Cell cycle</keyword>
<keyword id="KW-0132">Cell division</keyword>
<keyword id="KW-1003">Cell membrane</keyword>
<keyword id="KW-0133">Cell shape</keyword>
<keyword id="KW-0961">Cell wall biogenesis/degradation</keyword>
<keyword id="KW-0460">Magnesium</keyword>
<keyword id="KW-0472">Membrane</keyword>
<keyword id="KW-0479">Metal-binding</keyword>
<keyword id="KW-0573">Peptidoglycan synthesis</keyword>
<keyword id="KW-1185">Reference proteome</keyword>
<keyword id="KW-0808">Transferase</keyword>
<keyword id="KW-0812">Transmembrane</keyword>
<keyword id="KW-1133">Transmembrane helix</keyword>
<reference key="1">
    <citation type="journal article" date="1998" name="Nature">
        <title>Deciphering the biology of Mycobacterium tuberculosis from the complete genome sequence.</title>
        <authorList>
            <person name="Cole S.T."/>
            <person name="Brosch R."/>
            <person name="Parkhill J."/>
            <person name="Garnier T."/>
            <person name="Churcher C.M."/>
            <person name="Harris D.E."/>
            <person name="Gordon S.V."/>
            <person name="Eiglmeier K."/>
            <person name="Gas S."/>
            <person name="Barry C.E. III"/>
            <person name="Tekaia F."/>
            <person name="Badcock K."/>
            <person name="Basham D."/>
            <person name="Brown D."/>
            <person name="Chillingworth T."/>
            <person name="Connor R."/>
            <person name="Davies R.M."/>
            <person name="Devlin K."/>
            <person name="Feltwell T."/>
            <person name="Gentles S."/>
            <person name="Hamlin N."/>
            <person name="Holroyd S."/>
            <person name="Hornsby T."/>
            <person name="Jagels K."/>
            <person name="Krogh A."/>
            <person name="McLean J."/>
            <person name="Moule S."/>
            <person name="Murphy L.D."/>
            <person name="Oliver S."/>
            <person name="Osborne J."/>
            <person name="Quail M.A."/>
            <person name="Rajandream M.A."/>
            <person name="Rogers J."/>
            <person name="Rutter S."/>
            <person name="Seeger K."/>
            <person name="Skelton S."/>
            <person name="Squares S."/>
            <person name="Squares R."/>
            <person name="Sulston J.E."/>
            <person name="Taylor K."/>
            <person name="Whitehead S."/>
            <person name="Barrell B.G."/>
        </authorList>
    </citation>
    <scope>NUCLEOTIDE SEQUENCE [LARGE SCALE GENOMIC DNA]</scope>
    <source>
        <strain>ATCC 25618 / H37Rv</strain>
    </source>
</reference>
<reference key="2">
    <citation type="journal article" date="2008" name="BMC Syst. Biol.">
        <title>targetTB: a target identification pipeline for Mycobacterium tuberculosis through an interactome, reactome and genome-scale structural analysis.</title>
        <authorList>
            <person name="Raman K."/>
            <person name="Yeturu K."/>
            <person name="Chandra N."/>
        </authorList>
    </citation>
    <scope>IDENTIFICATION AS A DRUG TARGET [LARGE SCALE ANALYSIS]</scope>
</reference>
<reference key="3">
    <citation type="journal article" date="2011" name="Mol. Cell. Proteomics">
        <title>Proteogenomic analysis of Mycobacterium tuberculosis by high resolution mass spectrometry.</title>
        <authorList>
            <person name="Kelkar D.S."/>
            <person name="Kumar D."/>
            <person name="Kumar P."/>
            <person name="Balakrishnan L."/>
            <person name="Muthusamy B."/>
            <person name="Yadav A.K."/>
            <person name="Shrivastava P."/>
            <person name="Marimuthu A."/>
            <person name="Anand S."/>
            <person name="Sundaram H."/>
            <person name="Kingsbury R."/>
            <person name="Harsha H.C."/>
            <person name="Nair B."/>
            <person name="Prasad T.S."/>
            <person name="Chauhan D.S."/>
            <person name="Katoch K."/>
            <person name="Katoch V.M."/>
            <person name="Kumar P."/>
            <person name="Chaerkady R."/>
            <person name="Ramachandran S."/>
            <person name="Dash D."/>
            <person name="Pandey A."/>
        </authorList>
    </citation>
    <scope>IDENTIFICATION BY MASS SPECTROMETRY [LARGE SCALE ANALYSIS]</scope>
    <source>
        <strain>ATCC 25618 / H37Rv</strain>
    </source>
</reference>
<name>MRAY_MYCTU</name>
<sequence length="359" mass="37713">MRQILIAVAVAVTVSILLTPVLIRLFTKQGFGHQIREDGPPSHHTKRGTPSMGGVAILAGIWAGYLGAHLAGLAFDGEGIGASGLLVLGLATALGGVGFIDDLIKIRRSRNLGLNKTAKTVGQITSAVLFGVLVLQFRNAAGLTPGSADLSYVREIATVTLAPVLFVLFCVVIVSAWSNAVNFTDGLDGLAAGTMAMVTAAYVLITFWQYRNACVTAPGLGCYNVRDPLDLALIAAATAGACIGFLWWNAAPAKIFMGDTGSLALGGVIAGLSVTSRTEILAVVLGALFVAEITSVVLQILTFRTTGRRMFRMAPFHHHFELVGWAETTVIIRFWLLTAITCGLGVALFYGEWLAAVGA</sequence>
<protein>
    <recommendedName>
        <fullName evidence="1">Phospho-N-acetylmuramoyl-pentapeptide-transferase</fullName>
        <ecNumber evidence="1">2.7.8.13</ecNumber>
    </recommendedName>
    <alternativeName>
        <fullName evidence="1">UDP-MurNAc-pentapeptide phosphotransferase</fullName>
    </alternativeName>
</protein>
<evidence type="ECO:0000255" key="1">
    <source>
        <dbReference type="HAMAP-Rule" id="MF_00038"/>
    </source>
</evidence>
<dbReference type="EC" id="2.7.8.13" evidence="1"/>
<dbReference type="EMBL" id="AL123456">
    <property type="protein sequence ID" value="CCP44932.1"/>
    <property type="molecule type" value="Genomic_DNA"/>
</dbReference>
<dbReference type="PIR" id="H70579">
    <property type="entry name" value="H70579"/>
</dbReference>
<dbReference type="RefSeq" id="NP_216672.1">
    <property type="nucleotide sequence ID" value="NC_000962.3"/>
</dbReference>
<dbReference type="RefSeq" id="WP_003411171.1">
    <property type="nucleotide sequence ID" value="NZ_NVQJ01000044.1"/>
</dbReference>
<dbReference type="SMR" id="P9WMW7"/>
<dbReference type="FunCoup" id="P9WMW7">
    <property type="interactions" value="85"/>
</dbReference>
<dbReference type="STRING" id="83332.Rv2156c"/>
<dbReference type="BindingDB" id="P9WMW7"/>
<dbReference type="ChEMBL" id="CHEMBL1921665"/>
<dbReference type="PaxDb" id="83332-Rv2156c"/>
<dbReference type="DNASU" id="888098"/>
<dbReference type="GeneID" id="888098"/>
<dbReference type="KEGG" id="mtu:Rv2156c"/>
<dbReference type="KEGG" id="mtv:RVBD_2156c"/>
<dbReference type="TubercuList" id="Rv2156c"/>
<dbReference type="eggNOG" id="COG0472">
    <property type="taxonomic scope" value="Bacteria"/>
</dbReference>
<dbReference type="InParanoid" id="P9WMW7"/>
<dbReference type="OrthoDB" id="9805475at2"/>
<dbReference type="PhylomeDB" id="P9WMW7"/>
<dbReference type="BioCyc" id="MetaCyc:G185E-6364-MONOMER"/>
<dbReference type="UniPathway" id="UPA00219"/>
<dbReference type="PRO" id="PR:P9WMW7"/>
<dbReference type="Proteomes" id="UP000001584">
    <property type="component" value="Chromosome"/>
</dbReference>
<dbReference type="GO" id="GO:0005886">
    <property type="term" value="C:plasma membrane"/>
    <property type="evidence" value="ECO:0000318"/>
    <property type="project" value="GO_Central"/>
</dbReference>
<dbReference type="GO" id="GO:0046872">
    <property type="term" value="F:metal ion binding"/>
    <property type="evidence" value="ECO:0007669"/>
    <property type="project" value="UniProtKB-KW"/>
</dbReference>
<dbReference type="GO" id="GO:0008963">
    <property type="term" value="F:phospho-N-acetylmuramoyl-pentapeptide-transferase activity"/>
    <property type="evidence" value="ECO:0007669"/>
    <property type="project" value="UniProtKB-UniRule"/>
</dbReference>
<dbReference type="GO" id="GO:0016780">
    <property type="term" value="F:phosphotransferase activity, for other substituted phosphate groups"/>
    <property type="evidence" value="ECO:0000318"/>
    <property type="project" value="GO_Central"/>
</dbReference>
<dbReference type="GO" id="GO:0051992">
    <property type="term" value="F:UDP-N-acetylmuramoyl-L-alanyl-D-glutamyl-meso-2,6-diaminopimelyl-D-alanyl-D-alanine:undecaprenyl-phosphate transferase activity"/>
    <property type="evidence" value="ECO:0007669"/>
    <property type="project" value="RHEA"/>
</dbReference>
<dbReference type="GO" id="GO:0051301">
    <property type="term" value="P:cell division"/>
    <property type="evidence" value="ECO:0007669"/>
    <property type="project" value="UniProtKB-KW"/>
</dbReference>
<dbReference type="GO" id="GO:0044038">
    <property type="term" value="P:cell wall macromolecule biosynthetic process"/>
    <property type="evidence" value="ECO:0000318"/>
    <property type="project" value="GO_Central"/>
</dbReference>
<dbReference type="GO" id="GO:0071555">
    <property type="term" value="P:cell wall organization"/>
    <property type="evidence" value="ECO:0000318"/>
    <property type="project" value="GO_Central"/>
</dbReference>
<dbReference type="GO" id="GO:0009252">
    <property type="term" value="P:peptidoglycan biosynthetic process"/>
    <property type="evidence" value="ECO:0007669"/>
    <property type="project" value="UniProtKB-UniRule"/>
</dbReference>
<dbReference type="GO" id="GO:0008360">
    <property type="term" value="P:regulation of cell shape"/>
    <property type="evidence" value="ECO:0007669"/>
    <property type="project" value="UniProtKB-KW"/>
</dbReference>
<dbReference type="CDD" id="cd06852">
    <property type="entry name" value="GT_MraY"/>
    <property type="match status" value="1"/>
</dbReference>
<dbReference type="HAMAP" id="MF_00038">
    <property type="entry name" value="MraY"/>
    <property type="match status" value="1"/>
</dbReference>
<dbReference type="InterPro" id="IPR000715">
    <property type="entry name" value="Glycosyl_transferase_4"/>
</dbReference>
<dbReference type="InterPro" id="IPR003524">
    <property type="entry name" value="PNAcMuramoyl-5peptid_Trfase"/>
</dbReference>
<dbReference type="InterPro" id="IPR018480">
    <property type="entry name" value="PNAcMuramoyl-5peptid_Trfase_CS"/>
</dbReference>
<dbReference type="NCBIfam" id="TIGR00445">
    <property type="entry name" value="mraY"/>
    <property type="match status" value="1"/>
</dbReference>
<dbReference type="PANTHER" id="PTHR22926">
    <property type="entry name" value="PHOSPHO-N-ACETYLMURAMOYL-PENTAPEPTIDE-TRANSFERASE"/>
    <property type="match status" value="1"/>
</dbReference>
<dbReference type="PANTHER" id="PTHR22926:SF5">
    <property type="entry name" value="PHOSPHO-N-ACETYLMURAMOYL-PENTAPEPTIDE-TRANSFERASE HOMOLOG"/>
    <property type="match status" value="1"/>
</dbReference>
<dbReference type="Pfam" id="PF00953">
    <property type="entry name" value="Glycos_transf_4"/>
    <property type="match status" value="1"/>
</dbReference>
<dbReference type="Pfam" id="PF10555">
    <property type="entry name" value="MraY_sig1"/>
    <property type="match status" value="1"/>
</dbReference>
<dbReference type="PROSITE" id="PS01347">
    <property type="entry name" value="MRAY_1"/>
    <property type="match status" value="1"/>
</dbReference>
<dbReference type="PROSITE" id="PS01348">
    <property type="entry name" value="MRAY_2"/>
    <property type="match status" value="1"/>
</dbReference>